<comment type="function">
    <text evidence="1">Catalyzes the attachment of threonine to tRNA(Thr) in a two-step reaction: L-threonine is first activated by ATP to form Thr-AMP and then transferred to the acceptor end of tRNA(Thr). Also edits incorrectly charged L-seryl-tRNA(Thr).</text>
</comment>
<comment type="catalytic activity">
    <reaction evidence="1">
        <text>tRNA(Thr) + L-threonine + ATP = L-threonyl-tRNA(Thr) + AMP + diphosphate + H(+)</text>
        <dbReference type="Rhea" id="RHEA:24624"/>
        <dbReference type="Rhea" id="RHEA-COMP:9670"/>
        <dbReference type="Rhea" id="RHEA-COMP:9704"/>
        <dbReference type="ChEBI" id="CHEBI:15378"/>
        <dbReference type="ChEBI" id="CHEBI:30616"/>
        <dbReference type="ChEBI" id="CHEBI:33019"/>
        <dbReference type="ChEBI" id="CHEBI:57926"/>
        <dbReference type="ChEBI" id="CHEBI:78442"/>
        <dbReference type="ChEBI" id="CHEBI:78534"/>
        <dbReference type="ChEBI" id="CHEBI:456215"/>
        <dbReference type="EC" id="6.1.1.3"/>
    </reaction>
</comment>
<comment type="cofactor">
    <cofactor evidence="1">
        <name>Zn(2+)</name>
        <dbReference type="ChEBI" id="CHEBI:29105"/>
    </cofactor>
    <text evidence="1">Binds 1 zinc ion per subunit.</text>
</comment>
<comment type="subunit">
    <text evidence="1">Homodimer.</text>
</comment>
<comment type="subcellular location">
    <subcellularLocation>
        <location evidence="1">Cytoplasm</location>
    </subcellularLocation>
</comment>
<comment type="similarity">
    <text evidence="1">Belongs to the class-II aminoacyl-tRNA synthetase family.</text>
</comment>
<proteinExistence type="inferred from homology"/>
<organism>
    <name type="scientific">Leptothrix cholodnii (strain ATCC 51168 / LMG 8142 / SP-6)</name>
    <name type="common">Leptothrix discophora (strain SP-6)</name>
    <dbReference type="NCBI Taxonomy" id="395495"/>
    <lineage>
        <taxon>Bacteria</taxon>
        <taxon>Pseudomonadati</taxon>
        <taxon>Pseudomonadota</taxon>
        <taxon>Betaproteobacteria</taxon>
        <taxon>Burkholderiales</taxon>
        <taxon>Sphaerotilaceae</taxon>
        <taxon>Leptothrix</taxon>
    </lineage>
</organism>
<evidence type="ECO:0000255" key="1">
    <source>
        <dbReference type="HAMAP-Rule" id="MF_00184"/>
    </source>
</evidence>
<evidence type="ECO:0000255" key="2">
    <source>
        <dbReference type="PROSITE-ProRule" id="PRU01228"/>
    </source>
</evidence>
<protein>
    <recommendedName>
        <fullName evidence="1">Threonine--tRNA ligase</fullName>
        <ecNumber evidence="1">6.1.1.3</ecNumber>
    </recommendedName>
    <alternativeName>
        <fullName evidence="1">Threonyl-tRNA synthetase</fullName>
        <shortName evidence="1">ThrRS</shortName>
    </alternativeName>
</protein>
<name>SYT_LEPCP</name>
<gene>
    <name evidence="1" type="primary">thrS</name>
    <name type="ordered locus">Lcho_1745</name>
</gene>
<feature type="chain" id="PRO_1000098583" description="Threonine--tRNA ligase">
    <location>
        <begin position="1"/>
        <end position="637"/>
    </location>
</feature>
<feature type="domain" description="TGS" evidence="2">
    <location>
        <begin position="1"/>
        <end position="65"/>
    </location>
</feature>
<feature type="region of interest" description="Catalytic" evidence="1">
    <location>
        <begin position="246"/>
        <end position="537"/>
    </location>
</feature>
<feature type="binding site" evidence="1">
    <location>
        <position position="337"/>
    </location>
    <ligand>
        <name>Zn(2+)</name>
        <dbReference type="ChEBI" id="CHEBI:29105"/>
    </ligand>
</feature>
<feature type="binding site" evidence="1">
    <location>
        <position position="388"/>
    </location>
    <ligand>
        <name>Zn(2+)</name>
        <dbReference type="ChEBI" id="CHEBI:29105"/>
    </ligand>
</feature>
<feature type="binding site" evidence="1">
    <location>
        <position position="514"/>
    </location>
    <ligand>
        <name>Zn(2+)</name>
        <dbReference type="ChEBI" id="CHEBI:29105"/>
    </ligand>
</feature>
<reference key="1">
    <citation type="submission" date="2008-03" db="EMBL/GenBank/DDBJ databases">
        <title>Complete sequence of Leptothrix cholodnii SP-6.</title>
        <authorList>
            <consortium name="US DOE Joint Genome Institute"/>
            <person name="Copeland A."/>
            <person name="Lucas S."/>
            <person name="Lapidus A."/>
            <person name="Glavina del Rio T."/>
            <person name="Dalin E."/>
            <person name="Tice H."/>
            <person name="Bruce D."/>
            <person name="Goodwin L."/>
            <person name="Pitluck S."/>
            <person name="Chertkov O."/>
            <person name="Brettin T."/>
            <person name="Detter J.C."/>
            <person name="Han C."/>
            <person name="Kuske C.R."/>
            <person name="Schmutz J."/>
            <person name="Larimer F."/>
            <person name="Land M."/>
            <person name="Hauser L."/>
            <person name="Kyrpides N."/>
            <person name="Lykidis A."/>
            <person name="Emerson D."/>
            <person name="Richardson P."/>
        </authorList>
    </citation>
    <scope>NUCLEOTIDE SEQUENCE [LARGE SCALE GENOMIC DNA]</scope>
    <source>
        <strain>ATCC 51168 / LMG 8142 / SP-6</strain>
    </source>
</reference>
<keyword id="KW-0030">Aminoacyl-tRNA synthetase</keyword>
<keyword id="KW-0067">ATP-binding</keyword>
<keyword id="KW-0963">Cytoplasm</keyword>
<keyword id="KW-0436">Ligase</keyword>
<keyword id="KW-0479">Metal-binding</keyword>
<keyword id="KW-0547">Nucleotide-binding</keyword>
<keyword id="KW-0648">Protein biosynthesis</keyword>
<keyword id="KW-1185">Reference proteome</keyword>
<keyword id="KW-0694">RNA-binding</keyword>
<keyword id="KW-0820">tRNA-binding</keyword>
<keyword id="KW-0862">Zinc</keyword>
<dbReference type="EC" id="6.1.1.3" evidence="1"/>
<dbReference type="EMBL" id="CP001013">
    <property type="protein sequence ID" value="ACB34012.1"/>
    <property type="molecule type" value="Genomic_DNA"/>
</dbReference>
<dbReference type="RefSeq" id="WP_012346773.1">
    <property type="nucleotide sequence ID" value="NC_010524.1"/>
</dbReference>
<dbReference type="SMR" id="B1XYZ3"/>
<dbReference type="STRING" id="395495.Lcho_1745"/>
<dbReference type="KEGG" id="lch:Lcho_1745"/>
<dbReference type="eggNOG" id="COG0441">
    <property type="taxonomic scope" value="Bacteria"/>
</dbReference>
<dbReference type="HOGENOM" id="CLU_008554_0_1_4"/>
<dbReference type="OrthoDB" id="9802304at2"/>
<dbReference type="Proteomes" id="UP000001693">
    <property type="component" value="Chromosome"/>
</dbReference>
<dbReference type="GO" id="GO:0005829">
    <property type="term" value="C:cytosol"/>
    <property type="evidence" value="ECO:0007669"/>
    <property type="project" value="TreeGrafter"/>
</dbReference>
<dbReference type="GO" id="GO:0005524">
    <property type="term" value="F:ATP binding"/>
    <property type="evidence" value="ECO:0007669"/>
    <property type="project" value="UniProtKB-UniRule"/>
</dbReference>
<dbReference type="GO" id="GO:0046872">
    <property type="term" value="F:metal ion binding"/>
    <property type="evidence" value="ECO:0007669"/>
    <property type="project" value="UniProtKB-KW"/>
</dbReference>
<dbReference type="GO" id="GO:0004829">
    <property type="term" value="F:threonine-tRNA ligase activity"/>
    <property type="evidence" value="ECO:0007669"/>
    <property type="project" value="UniProtKB-UniRule"/>
</dbReference>
<dbReference type="GO" id="GO:0000049">
    <property type="term" value="F:tRNA binding"/>
    <property type="evidence" value="ECO:0007669"/>
    <property type="project" value="UniProtKB-KW"/>
</dbReference>
<dbReference type="GO" id="GO:0006435">
    <property type="term" value="P:threonyl-tRNA aminoacylation"/>
    <property type="evidence" value="ECO:0007669"/>
    <property type="project" value="UniProtKB-UniRule"/>
</dbReference>
<dbReference type="CDD" id="cd01667">
    <property type="entry name" value="TGS_ThrRS"/>
    <property type="match status" value="1"/>
</dbReference>
<dbReference type="CDD" id="cd00860">
    <property type="entry name" value="ThrRS_anticodon"/>
    <property type="match status" value="1"/>
</dbReference>
<dbReference type="CDD" id="cd00771">
    <property type="entry name" value="ThrRS_core"/>
    <property type="match status" value="1"/>
</dbReference>
<dbReference type="FunFam" id="3.10.20.30:FF:000005">
    <property type="entry name" value="Threonine--tRNA ligase"/>
    <property type="match status" value="1"/>
</dbReference>
<dbReference type="FunFam" id="3.30.54.20:FF:000002">
    <property type="entry name" value="Threonine--tRNA ligase"/>
    <property type="match status" value="1"/>
</dbReference>
<dbReference type="FunFam" id="3.30.930.10:FF:000002">
    <property type="entry name" value="Threonine--tRNA ligase"/>
    <property type="match status" value="1"/>
</dbReference>
<dbReference type="FunFam" id="3.40.50.800:FF:000001">
    <property type="entry name" value="Threonine--tRNA ligase"/>
    <property type="match status" value="1"/>
</dbReference>
<dbReference type="FunFam" id="3.30.980.10:FF:000005">
    <property type="entry name" value="Threonyl-tRNA synthetase, mitochondrial"/>
    <property type="match status" value="1"/>
</dbReference>
<dbReference type="Gene3D" id="3.10.20.30">
    <property type="match status" value="1"/>
</dbReference>
<dbReference type="Gene3D" id="3.30.54.20">
    <property type="match status" value="1"/>
</dbReference>
<dbReference type="Gene3D" id="3.40.50.800">
    <property type="entry name" value="Anticodon-binding domain"/>
    <property type="match status" value="1"/>
</dbReference>
<dbReference type="Gene3D" id="3.30.930.10">
    <property type="entry name" value="Bira Bifunctional Protein, Domain 2"/>
    <property type="match status" value="1"/>
</dbReference>
<dbReference type="Gene3D" id="3.30.980.10">
    <property type="entry name" value="Threonyl-trna Synthetase, Chain A, domain 2"/>
    <property type="match status" value="1"/>
</dbReference>
<dbReference type="HAMAP" id="MF_00184">
    <property type="entry name" value="Thr_tRNA_synth"/>
    <property type="match status" value="1"/>
</dbReference>
<dbReference type="InterPro" id="IPR002314">
    <property type="entry name" value="aa-tRNA-synt_IIb"/>
</dbReference>
<dbReference type="InterPro" id="IPR006195">
    <property type="entry name" value="aa-tRNA-synth_II"/>
</dbReference>
<dbReference type="InterPro" id="IPR045864">
    <property type="entry name" value="aa-tRNA-synth_II/BPL/LPL"/>
</dbReference>
<dbReference type="InterPro" id="IPR004154">
    <property type="entry name" value="Anticodon-bd"/>
</dbReference>
<dbReference type="InterPro" id="IPR036621">
    <property type="entry name" value="Anticodon-bd_dom_sf"/>
</dbReference>
<dbReference type="InterPro" id="IPR012675">
    <property type="entry name" value="Beta-grasp_dom_sf"/>
</dbReference>
<dbReference type="InterPro" id="IPR004095">
    <property type="entry name" value="TGS"/>
</dbReference>
<dbReference type="InterPro" id="IPR012676">
    <property type="entry name" value="TGS-like"/>
</dbReference>
<dbReference type="InterPro" id="IPR002320">
    <property type="entry name" value="Thr-tRNA-ligase_IIa"/>
</dbReference>
<dbReference type="InterPro" id="IPR018163">
    <property type="entry name" value="Thr/Ala-tRNA-synth_IIc_edit"/>
</dbReference>
<dbReference type="InterPro" id="IPR047246">
    <property type="entry name" value="ThrRS_anticodon"/>
</dbReference>
<dbReference type="InterPro" id="IPR033728">
    <property type="entry name" value="ThrRS_core"/>
</dbReference>
<dbReference type="InterPro" id="IPR012947">
    <property type="entry name" value="tRNA_SAD"/>
</dbReference>
<dbReference type="NCBIfam" id="TIGR00418">
    <property type="entry name" value="thrS"/>
    <property type="match status" value="1"/>
</dbReference>
<dbReference type="PANTHER" id="PTHR11451:SF44">
    <property type="entry name" value="THREONINE--TRNA LIGASE, CHLOROPLASTIC_MITOCHONDRIAL 2"/>
    <property type="match status" value="1"/>
</dbReference>
<dbReference type="PANTHER" id="PTHR11451">
    <property type="entry name" value="THREONINE-TRNA LIGASE"/>
    <property type="match status" value="1"/>
</dbReference>
<dbReference type="Pfam" id="PF03129">
    <property type="entry name" value="HGTP_anticodon"/>
    <property type="match status" value="1"/>
</dbReference>
<dbReference type="Pfam" id="PF02824">
    <property type="entry name" value="TGS"/>
    <property type="match status" value="1"/>
</dbReference>
<dbReference type="Pfam" id="PF00587">
    <property type="entry name" value="tRNA-synt_2b"/>
    <property type="match status" value="1"/>
</dbReference>
<dbReference type="Pfam" id="PF07973">
    <property type="entry name" value="tRNA_SAD"/>
    <property type="match status" value="1"/>
</dbReference>
<dbReference type="PRINTS" id="PR01047">
    <property type="entry name" value="TRNASYNTHTHR"/>
</dbReference>
<dbReference type="SMART" id="SM00863">
    <property type="entry name" value="tRNA_SAD"/>
    <property type="match status" value="1"/>
</dbReference>
<dbReference type="SUPFAM" id="SSF52954">
    <property type="entry name" value="Class II aaRS ABD-related"/>
    <property type="match status" value="1"/>
</dbReference>
<dbReference type="SUPFAM" id="SSF55681">
    <property type="entry name" value="Class II aaRS and biotin synthetases"/>
    <property type="match status" value="1"/>
</dbReference>
<dbReference type="SUPFAM" id="SSF81271">
    <property type="entry name" value="TGS-like"/>
    <property type="match status" value="1"/>
</dbReference>
<dbReference type="SUPFAM" id="SSF55186">
    <property type="entry name" value="ThrRS/AlaRS common domain"/>
    <property type="match status" value="1"/>
</dbReference>
<dbReference type="PROSITE" id="PS50862">
    <property type="entry name" value="AA_TRNA_LIGASE_II"/>
    <property type="match status" value="1"/>
</dbReference>
<dbReference type="PROSITE" id="PS51880">
    <property type="entry name" value="TGS"/>
    <property type="match status" value="1"/>
</dbReference>
<accession>B1XYZ3</accession>
<sequence>MIAIQLPDGSRREFDGPVTVAEVAASIGAGLAKAALAGRIGTGDAARLVDTSHRIEADEALSIITAKDAAGLDVIRHSTAHLLAYAVKELFPDAQVTIGPTIENGFFYDFSYKRPFTPDDLAAIEKKMGDLAAKDEPVVRSVMPRDEAVSYFKSIGEAYKAEIIESIPADQAVSLYAEGKFTDLCRGPHVPSTGKLKFFKLMKVAGAYWRGDHRNEMLQRIYGTAWATKDDLQKYLVMLEEAEKRDHRKLGRELDLFHIDEHAPGVVFWHPKGWTVWQQVEQYMRRVYRDNGYQEVKGPQILDKGLWEKTGHWDKYRDNMFTTESEKRDYALKPMNCPGHILIFKQGIKSYRDLPLRYGEFGQCHRNEPSGGLHGIMRVRGFTQDDGHIFCTEDQILPECDAFTTLLQKVYADFGFTEILYKVATRPEKRIGSDELWDKAEAALIASLRNSGCEFEISPGEGAFYGPKVEYTLKDALGRHWQCGTIQVDFSLPERLDAEYVAESGERLHPVMLHRAILGSLERFIGILIEEHAGALPFWLAPTQVSVLNITDGQADYARDVARSLQKQGLRVALDLRNEKITYKIREHSLQKVPYLIVVGDKERASGAVAVRARGNQDLGVMALEAFSQKLAAELAT</sequence>